<proteinExistence type="inferred from homology"/>
<keyword id="KW-0963">Cytoplasm</keyword>
<keyword id="KW-0489">Methyltransferase</keyword>
<keyword id="KW-1185">Reference proteome</keyword>
<keyword id="KW-0698">rRNA processing</keyword>
<keyword id="KW-0949">S-adenosyl-L-methionine</keyword>
<keyword id="KW-0808">Transferase</keyword>
<accession>A9B9X8</accession>
<organism>
    <name type="scientific">Prochlorococcus marinus (strain MIT 9211)</name>
    <dbReference type="NCBI Taxonomy" id="93059"/>
    <lineage>
        <taxon>Bacteria</taxon>
        <taxon>Bacillati</taxon>
        <taxon>Cyanobacteriota</taxon>
        <taxon>Cyanophyceae</taxon>
        <taxon>Synechococcales</taxon>
        <taxon>Prochlorococcaceae</taxon>
        <taxon>Prochlorococcus</taxon>
    </lineage>
</organism>
<comment type="function">
    <text evidence="1">Specifically methylates the pseudouridine at position 1915 (m3Psi1915) in 23S rRNA.</text>
</comment>
<comment type="catalytic activity">
    <reaction evidence="1">
        <text>pseudouridine(1915) in 23S rRNA + S-adenosyl-L-methionine = N(3)-methylpseudouridine(1915) in 23S rRNA + S-adenosyl-L-homocysteine + H(+)</text>
        <dbReference type="Rhea" id="RHEA:42752"/>
        <dbReference type="Rhea" id="RHEA-COMP:10221"/>
        <dbReference type="Rhea" id="RHEA-COMP:10222"/>
        <dbReference type="ChEBI" id="CHEBI:15378"/>
        <dbReference type="ChEBI" id="CHEBI:57856"/>
        <dbReference type="ChEBI" id="CHEBI:59789"/>
        <dbReference type="ChEBI" id="CHEBI:65314"/>
        <dbReference type="ChEBI" id="CHEBI:74486"/>
        <dbReference type="EC" id="2.1.1.177"/>
    </reaction>
</comment>
<comment type="subunit">
    <text evidence="1">Homodimer.</text>
</comment>
<comment type="subcellular location">
    <subcellularLocation>
        <location evidence="1">Cytoplasm</location>
    </subcellularLocation>
</comment>
<comment type="similarity">
    <text evidence="1">Belongs to the RNA methyltransferase RlmH family.</text>
</comment>
<reference key="1">
    <citation type="journal article" date="2007" name="PLoS Genet.">
        <title>Patterns and implications of gene gain and loss in the evolution of Prochlorococcus.</title>
        <authorList>
            <person name="Kettler G.C."/>
            <person name="Martiny A.C."/>
            <person name="Huang K."/>
            <person name="Zucker J."/>
            <person name="Coleman M.L."/>
            <person name="Rodrigue S."/>
            <person name="Chen F."/>
            <person name="Lapidus A."/>
            <person name="Ferriera S."/>
            <person name="Johnson J."/>
            <person name="Steglich C."/>
            <person name="Church G.M."/>
            <person name="Richardson P."/>
            <person name="Chisholm S.W."/>
        </authorList>
    </citation>
    <scope>NUCLEOTIDE SEQUENCE [LARGE SCALE GENOMIC DNA]</scope>
    <source>
        <strain>MIT 9211</strain>
    </source>
</reference>
<evidence type="ECO:0000255" key="1">
    <source>
        <dbReference type="HAMAP-Rule" id="MF_00658"/>
    </source>
</evidence>
<protein>
    <recommendedName>
        <fullName evidence="1">Ribosomal RNA large subunit methyltransferase H</fullName>
        <ecNumber evidence="1">2.1.1.177</ecNumber>
    </recommendedName>
    <alternativeName>
        <fullName evidence="1">23S rRNA (pseudouridine1915-N3)-methyltransferase</fullName>
    </alternativeName>
    <alternativeName>
        <fullName evidence="1">23S rRNA m3Psi1915 methyltransferase</fullName>
    </alternativeName>
    <alternativeName>
        <fullName evidence="1">rRNA (pseudouridine-N3-)-methyltransferase RlmH</fullName>
    </alternativeName>
</protein>
<feature type="chain" id="PRO_0000366637" description="Ribosomal RNA large subunit methyltransferase H">
    <location>
        <begin position="1"/>
        <end position="145"/>
    </location>
</feature>
<feature type="binding site" evidence="1">
    <location>
        <position position="64"/>
    </location>
    <ligand>
        <name>S-adenosyl-L-methionine</name>
        <dbReference type="ChEBI" id="CHEBI:59789"/>
    </ligand>
</feature>
<feature type="binding site" evidence="1">
    <location>
        <position position="93"/>
    </location>
    <ligand>
        <name>S-adenosyl-L-methionine</name>
        <dbReference type="ChEBI" id="CHEBI:59789"/>
    </ligand>
</feature>
<feature type="binding site" evidence="1">
    <location>
        <begin position="112"/>
        <end position="117"/>
    </location>
    <ligand>
        <name>S-adenosyl-L-methionine</name>
        <dbReference type="ChEBI" id="CHEBI:59789"/>
    </ligand>
</feature>
<dbReference type="EC" id="2.1.1.177" evidence="1"/>
<dbReference type="EMBL" id="CP000878">
    <property type="protein sequence ID" value="ABX08640.1"/>
    <property type="molecule type" value="Genomic_DNA"/>
</dbReference>
<dbReference type="RefSeq" id="WP_012195262.1">
    <property type="nucleotide sequence ID" value="NC_009976.1"/>
</dbReference>
<dbReference type="SMR" id="A9B9X8"/>
<dbReference type="STRING" id="93059.P9211_07091"/>
<dbReference type="KEGG" id="pmj:P9211_07091"/>
<dbReference type="eggNOG" id="COG1576">
    <property type="taxonomic scope" value="Bacteria"/>
</dbReference>
<dbReference type="HOGENOM" id="CLU_100552_2_0_3"/>
<dbReference type="OrthoDB" id="9806643at2"/>
<dbReference type="Proteomes" id="UP000000788">
    <property type="component" value="Chromosome"/>
</dbReference>
<dbReference type="GO" id="GO:0005737">
    <property type="term" value="C:cytoplasm"/>
    <property type="evidence" value="ECO:0007669"/>
    <property type="project" value="UniProtKB-SubCell"/>
</dbReference>
<dbReference type="GO" id="GO:0070038">
    <property type="term" value="F:rRNA (pseudouridine-N3-)-methyltransferase activity"/>
    <property type="evidence" value="ECO:0007669"/>
    <property type="project" value="UniProtKB-UniRule"/>
</dbReference>
<dbReference type="CDD" id="cd18081">
    <property type="entry name" value="RlmH-like"/>
    <property type="match status" value="1"/>
</dbReference>
<dbReference type="Gene3D" id="3.40.1280.10">
    <property type="match status" value="1"/>
</dbReference>
<dbReference type="HAMAP" id="MF_00658">
    <property type="entry name" value="23SrRNA_methyltr_H"/>
    <property type="match status" value="1"/>
</dbReference>
<dbReference type="InterPro" id="IPR029028">
    <property type="entry name" value="Alpha/beta_knot_MTases"/>
</dbReference>
<dbReference type="InterPro" id="IPR003742">
    <property type="entry name" value="RlmH-like"/>
</dbReference>
<dbReference type="InterPro" id="IPR029026">
    <property type="entry name" value="tRNA_m1G_MTases_N"/>
</dbReference>
<dbReference type="PANTHER" id="PTHR33603">
    <property type="entry name" value="METHYLTRANSFERASE"/>
    <property type="match status" value="1"/>
</dbReference>
<dbReference type="PANTHER" id="PTHR33603:SF1">
    <property type="entry name" value="RIBOSOMAL RNA LARGE SUBUNIT METHYLTRANSFERASE H"/>
    <property type="match status" value="1"/>
</dbReference>
<dbReference type="Pfam" id="PF02590">
    <property type="entry name" value="SPOUT_MTase"/>
    <property type="match status" value="1"/>
</dbReference>
<dbReference type="PIRSF" id="PIRSF004505">
    <property type="entry name" value="MT_bac"/>
    <property type="match status" value="1"/>
</dbReference>
<dbReference type="SUPFAM" id="SSF75217">
    <property type="entry name" value="alpha/beta knot"/>
    <property type="match status" value="1"/>
</dbReference>
<gene>
    <name evidence="1" type="primary">rlmH</name>
    <name type="ordered locus">P9211_07091</name>
</gene>
<sequence>MLNPSRYRILAIGKTRKAWIQNGLNLYIKRLPGLTITELKDSDLKKEAQSIRSSIKTNELLIILTEEGESLTSLGFANRLKSLGSSRLLFVIGSANGLDSEIKAMANWSISLSPLTFPHEIARLLLIEQLYRAKNICEGGSYHRN</sequence>
<name>RLMH_PROM4</name>